<proteinExistence type="inferred from homology"/>
<accession>C4K3J5</accession>
<gene>
    <name evidence="1" type="primary">pckA</name>
    <name type="ordered locus">HDEF_0382</name>
</gene>
<keyword id="KW-0067">ATP-binding</keyword>
<keyword id="KW-0963">Cytoplasm</keyword>
<keyword id="KW-0210">Decarboxylase</keyword>
<keyword id="KW-0312">Gluconeogenesis</keyword>
<keyword id="KW-0456">Lyase</keyword>
<keyword id="KW-0464">Manganese</keyword>
<keyword id="KW-0479">Metal-binding</keyword>
<keyword id="KW-0547">Nucleotide-binding</keyword>
<name>PCKA_HAMD5</name>
<evidence type="ECO:0000255" key="1">
    <source>
        <dbReference type="HAMAP-Rule" id="MF_00453"/>
    </source>
</evidence>
<feature type="chain" id="PRO_1000206240" description="Phosphoenolpyruvate carboxykinase (ATP)">
    <location>
        <begin position="1"/>
        <end position="539"/>
    </location>
</feature>
<feature type="binding site" evidence="1">
    <location>
        <position position="64"/>
    </location>
    <ligand>
        <name>substrate</name>
    </ligand>
</feature>
<feature type="binding site" evidence="1">
    <location>
        <position position="206"/>
    </location>
    <ligand>
        <name>substrate</name>
    </ligand>
</feature>
<feature type="binding site" evidence="1">
    <location>
        <position position="212"/>
    </location>
    <ligand>
        <name>ATP</name>
        <dbReference type="ChEBI" id="CHEBI:30616"/>
    </ligand>
</feature>
<feature type="binding site" evidence="1">
    <location>
        <position position="212"/>
    </location>
    <ligand>
        <name>Mn(2+)</name>
        <dbReference type="ChEBI" id="CHEBI:29035"/>
    </ligand>
</feature>
<feature type="binding site" evidence="1">
    <location>
        <position position="212"/>
    </location>
    <ligand>
        <name>substrate</name>
    </ligand>
</feature>
<feature type="binding site" evidence="1">
    <location>
        <position position="231"/>
    </location>
    <ligand>
        <name>ATP</name>
        <dbReference type="ChEBI" id="CHEBI:30616"/>
    </ligand>
</feature>
<feature type="binding site" evidence="1">
    <location>
        <position position="231"/>
    </location>
    <ligand>
        <name>Mn(2+)</name>
        <dbReference type="ChEBI" id="CHEBI:29035"/>
    </ligand>
</feature>
<feature type="binding site" evidence="1">
    <location>
        <begin position="247"/>
        <end position="255"/>
    </location>
    <ligand>
        <name>ATP</name>
        <dbReference type="ChEBI" id="CHEBI:30616"/>
    </ligand>
</feature>
<feature type="binding site" evidence="1">
    <location>
        <position position="268"/>
    </location>
    <ligand>
        <name>Mn(2+)</name>
        <dbReference type="ChEBI" id="CHEBI:29035"/>
    </ligand>
</feature>
<feature type="binding site" evidence="1">
    <location>
        <position position="296"/>
    </location>
    <ligand>
        <name>ATP</name>
        <dbReference type="ChEBI" id="CHEBI:30616"/>
    </ligand>
</feature>
<feature type="binding site" evidence="1">
    <location>
        <position position="332"/>
    </location>
    <ligand>
        <name>ATP</name>
        <dbReference type="ChEBI" id="CHEBI:30616"/>
    </ligand>
</feature>
<feature type="binding site" evidence="1">
    <location>
        <position position="332"/>
    </location>
    <ligand>
        <name>substrate</name>
    </ligand>
</feature>
<feature type="binding site" evidence="1">
    <location>
        <begin position="448"/>
        <end position="449"/>
    </location>
    <ligand>
        <name>ATP</name>
        <dbReference type="ChEBI" id="CHEBI:30616"/>
    </ligand>
</feature>
<feature type="binding site" evidence="1">
    <location>
        <position position="454"/>
    </location>
    <ligand>
        <name>ATP</name>
        <dbReference type="ChEBI" id="CHEBI:30616"/>
    </ligand>
</feature>
<comment type="function">
    <text evidence="1">Involved in the gluconeogenesis. Catalyzes the conversion of oxaloacetate (OAA) to phosphoenolpyruvate (PEP) through direct phosphoryl transfer between the nucleoside triphosphate and OAA.</text>
</comment>
<comment type="catalytic activity">
    <reaction evidence="1">
        <text>oxaloacetate + ATP = phosphoenolpyruvate + ADP + CO2</text>
        <dbReference type="Rhea" id="RHEA:18617"/>
        <dbReference type="ChEBI" id="CHEBI:16452"/>
        <dbReference type="ChEBI" id="CHEBI:16526"/>
        <dbReference type="ChEBI" id="CHEBI:30616"/>
        <dbReference type="ChEBI" id="CHEBI:58702"/>
        <dbReference type="ChEBI" id="CHEBI:456216"/>
        <dbReference type="EC" id="4.1.1.49"/>
    </reaction>
</comment>
<comment type="cofactor">
    <cofactor evidence="1">
        <name>Mn(2+)</name>
        <dbReference type="ChEBI" id="CHEBI:29035"/>
    </cofactor>
    <text evidence="1">Binds 1 Mn(2+) ion per subunit.</text>
</comment>
<comment type="pathway">
    <text evidence="1">Carbohydrate biosynthesis; gluconeogenesis.</text>
</comment>
<comment type="subunit">
    <text evidence="1">Monomer.</text>
</comment>
<comment type="subcellular location">
    <subcellularLocation>
        <location evidence="1">Cytoplasm</location>
    </subcellularLocation>
</comment>
<comment type="similarity">
    <text evidence="1">Belongs to the phosphoenolpyruvate carboxykinase (ATP) family.</text>
</comment>
<protein>
    <recommendedName>
        <fullName evidence="1">Phosphoenolpyruvate carboxykinase (ATP)</fullName>
        <shortName evidence="1">PCK</shortName>
        <shortName evidence="1">PEP carboxykinase</shortName>
        <shortName evidence="1">PEPCK</shortName>
        <ecNumber evidence="1">4.1.1.49</ecNumber>
    </recommendedName>
</protein>
<dbReference type="EC" id="4.1.1.49" evidence="1"/>
<dbReference type="EMBL" id="CP001277">
    <property type="protein sequence ID" value="ACQ67138.1"/>
    <property type="molecule type" value="Genomic_DNA"/>
</dbReference>
<dbReference type="RefSeq" id="WP_012738098.1">
    <property type="nucleotide sequence ID" value="NC_012751.1"/>
</dbReference>
<dbReference type="SMR" id="C4K3J5"/>
<dbReference type="STRING" id="572265.HDEF_0382"/>
<dbReference type="GeneID" id="66260289"/>
<dbReference type="KEGG" id="hde:HDEF_0382"/>
<dbReference type="eggNOG" id="COG1866">
    <property type="taxonomic scope" value="Bacteria"/>
</dbReference>
<dbReference type="HOGENOM" id="CLU_018247_0_1_6"/>
<dbReference type="UniPathway" id="UPA00138"/>
<dbReference type="Proteomes" id="UP000002334">
    <property type="component" value="Chromosome"/>
</dbReference>
<dbReference type="GO" id="GO:0005829">
    <property type="term" value="C:cytosol"/>
    <property type="evidence" value="ECO:0007669"/>
    <property type="project" value="TreeGrafter"/>
</dbReference>
<dbReference type="GO" id="GO:0005524">
    <property type="term" value="F:ATP binding"/>
    <property type="evidence" value="ECO:0007669"/>
    <property type="project" value="UniProtKB-UniRule"/>
</dbReference>
<dbReference type="GO" id="GO:0046872">
    <property type="term" value="F:metal ion binding"/>
    <property type="evidence" value="ECO:0007669"/>
    <property type="project" value="UniProtKB-KW"/>
</dbReference>
<dbReference type="GO" id="GO:0004612">
    <property type="term" value="F:phosphoenolpyruvate carboxykinase (ATP) activity"/>
    <property type="evidence" value="ECO:0007669"/>
    <property type="project" value="UniProtKB-UniRule"/>
</dbReference>
<dbReference type="GO" id="GO:0006094">
    <property type="term" value="P:gluconeogenesis"/>
    <property type="evidence" value="ECO:0007669"/>
    <property type="project" value="UniProtKB-UniRule"/>
</dbReference>
<dbReference type="CDD" id="cd00484">
    <property type="entry name" value="PEPCK_ATP"/>
    <property type="match status" value="1"/>
</dbReference>
<dbReference type="FunFam" id="3.40.449.10:FF:000001">
    <property type="entry name" value="Phosphoenolpyruvate carboxykinase (ATP)"/>
    <property type="match status" value="1"/>
</dbReference>
<dbReference type="Gene3D" id="3.90.228.20">
    <property type="match status" value="1"/>
</dbReference>
<dbReference type="Gene3D" id="3.40.449.10">
    <property type="entry name" value="Phosphoenolpyruvate Carboxykinase, domain 1"/>
    <property type="match status" value="1"/>
</dbReference>
<dbReference type="Gene3D" id="2.170.8.10">
    <property type="entry name" value="Phosphoenolpyruvate Carboxykinase, domain 2"/>
    <property type="match status" value="1"/>
</dbReference>
<dbReference type="HAMAP" id="MF_00453">
    <property type="entry name" value="PEPCK_ATP"/>
    <property type="match status" value="1"/>
</dbReference>
<dbReference type="InterPro" id="IPR001272">
    <property type="entry name" value="PEP_carboxykinase_ATP"/>
</dbReference>
<dbReference type="InterPro" id="IPR013035">
    <property type="entry name" value="PEP_carboxykinase_C"/>
</dbReference>
<dbReference type="InterPro" id="IPR008210">
    <property type="entry name" value="PEP_carboxykinase_N"/>
</dbReference>
<dbReference type="InterPro" id="IPR015994">
    <property type="entry name" value="PEPCK_ATP_CS"/>
</dbReference>
<dbReference type="NCBIfam" id="TIGR00224">
    <property type="entry name" value="pckA"/>
    <property type="match status" value="1"/>
</dbReference>
<dbReference type="NCBIfam" id="NF006819">
    <property type="entry name" value="PRK09344.1-1"/>
    <property type="match status" value="1"/>
</dbReference>
<dbReference type="NCBIfam" id="NF006820">
    <property type="entry name" value="PRK09344.1-2"/>
    <property type="match status" value="1"/>
</dbReference>
<dbReference type="NCBIfam" id="NF006821">
    <property type="entry name" value="PRK09344.1-3"/>
    <property type="match status" value="1"/>
</dbReference>
<dbReference type="PANTHER" id="PTHR30031:SF0">
    <property type="entry name" value="PHOSPHOENOLPYRUVATE CARBOXYKINASE (ATP)"/>
    <property type="match status" value="1"/>
</dbReference>
<dbReference type="PANTHER" id="PTHR30031">
    <property type="entry name" value="PHOSPHOENOLPYRUVATE CARBOXYKINASE ATP"/>
    <property type="match status" value="1"/>
</dbReference>
<dbReference type="Pfam" id="PF01293">
    <property type="entry name" value="PEPCK_ATP"/>
    <property type="match status" value="1"/>
</dbReference>
<dbReference type="PIRSF" id="PIRSF006294">
    <property type="entry name" value="PEP_crbxkin"/>
    <property type="match status" value="1"/>
</dbReference>
<dbReference type="SUPFAM" id="SSF68923">
    <property type="entry name" value="PEP carboxykinase N-terminal domain"/>
    <property type="match status" value="1"/>
</dbReference>
<dbReference type="SUPFAM" id="SSF53795">
    <property type="entry name" value="PEP carboxykinase-like"/>
    <property type="match status" value="1"/>
</dbReference>
<dbReference type="PROSITE" id="PS00532">
    <property type="entry name" value="PEPCK_ATP"/>
    <property type="match status" value="1"/>
</dbReference>
<organism>
    <name type="scientific">Hamiltonella defensa subsp. Acyrthosiphon pisum (strain 5AT)</name>
    <dbReference type="NCBI Taxonomy" id="572265"/>
    <lineage>
        <taxon>Bacteria</taxon>
        <taxon>Pseudomonadati</taxon>
        <taxon>Pseudomonadota</taxon>
        <taxon>Gammaproteobacteria</taxon>
        <taxon>Enterobacterales</taxon>
        <taxon>Enterobacteriaceae</taxon>
        <taxon>aphid secondary symbionts</taxon>
        <taxon>Candidatus Hamiltonella</taxon>
    </lineage>
</organism>
<sequence length="539" mass="60439">MHNINHLLNTLTDYGIHNTGKIFYNPSYSILFQEETRDTLVGFERGTVTKLGAVAVDTGIFTGRSPKDKYIVRDDITRDTFWWADQGKNKSDNHPITQAIWNELKTCVTQQLSNKPLFVVDAFCGAHSNSRLQVRFITEVAWQAHFVKNMFIRPSEEELTRFHPDFVVMNGAKCTNPNWKEQGLHSKNFVAFNLTERIQLIGGTWYGGEMKKGLFSMMNYFLPLKRIAAMHCSANVGVKGDVAVFFGLSGTGKTTLSADPKRQLIGDDEHGWDDEGVFNFEGGCYAKTIELSESDEPDIYHAIKRDALLENVVVLPDATVDFNDSSKTQNTRVSYPIYHIQNIVQPVSKAGHAKKIIFLTADAFGVLPPVVHLTLEQTQYHFLSGFTSKLAGTELGITSPVPTFSACFGEAFLSLHPTQYAEVLLQRMQAAQAKAYLVNTGWNGMGHRISIKNTRAIIEAILHEKIDHVPTFNLPIFNLSVPTEIEGVNSEILDPRASYSEVKEWQHKAENLARRFIKNFEQYSDTAVGALLLKSGPEL</sequence>
<reference key="1">
    <citation type="journal article" date="2009" name="Proc. Natl. Acad. Sci. U.S.A.">
        <title>Hamiltonella defensa, genome evolution of protective bacterial endosymbiont from pathogenic ancestors.</title>
        <authorList>
            <person name="Degnan P.H."/>
            <person name="Yu Y."/>
            <person name="Sisneros N."/>
            <person name="Wing R.A."/>
            <person name="Moran N.A."/>
        </authorList>
    </citation>
    <scope>NUCLEOTIDE SEQUENCE [LARGE SCALE GENOMIC DNA]</scope>
    <source>
        <strain>5AT</strain>
    </source>
</reference>